<keyword id="KW-0001">2Fe-2S</keyword>
<keyword id="KW-0238">DNA-binding</keyword>
<keyword id="KW-0408">Iron</keyword>
<keyword id="KW-0411">Iron-sulfur</keyword>
<keyword id="KW-0479">Metal-binding</keyword>
<keyword id="KW-0678">Repressor</keyword>
<keyword id="KW-0804">Transcription</keyword>
<keyword id="KW-0805">Transcription regulation</keyword>
<sequence length="141" mass="15608">MQLTSFTDYGLRALIYMASLPDGRMTSISEVTEVYGVSRNHMVKIINQLSRAGFVTAVRGKNGGIRLGKPANTICIGDVVRELEPLSLVNCSSEFCHITPACRLKQALSKAVQSFLKELDNYTLADLVEENQPLYKLLLVE</sequence>
<protein>
    <recommendedName>
        <fullName evidence="1">HTH-type transcriptional repressor NsrR</fullName>
    </recommendedName>
</protein>
<reference key="1">
    <citation type="journal article" date="2009" name="BMC Genomics">
        <title>Pseudogene accumulation in the evolutionary histories of Salmonella enterica serovars Paratyphi A and Typhi.</title>
        <authorList>
            <person name="Holt K.E."/>
            <person name="Thomson N.R."/>
            <person name="Wain J."/>
            <person name="Langridge G.C."/>
            <person name="Hasan R."/>
            <person name="Bhutta Z.A."/>
            <person name="Quail M.A."/>
            <person name="Norbertczak H."/>
            <person name="Walker D."/>
            <person name="Simmonds M."/>
            <person name="White B."/>
            <person name="Bason N."/>
            <person name="Mungall K."/>
            <person name="Dougan G."/>
            <person name="Parkhill J."/>
        </authorList>
    </citation>
    <scope>NUCLEOTIDE SEQUENCE [LARGE SCALE GENOMIC DNA]</scope>
    <source>
        <strain>AKU_12601</strain>
    </source>
</reference>
<feature type="chain" id="PRO_1000138130" description="HTH-type transcriptional repressor NsrR">
    <location>
        <begin position="1"/>
        <end position="141"/>
    </location>
</feature>
<feature type="domain" description="HTH rrf2-type" evidence="1">
    <location>
        <begin position="2"/>
        <end position="129"/>
    </location>
</feature>
<feature type="DNA-binding region" description="H-T-H motif" evidence="1">
    <location>
        <begin position="28"/>
        <end position="51"/>
    </location>
</feature>
<feature type="binding site" evidence="1">
    <location>
        <position position="91"/>
    </location>
    <ligand>
        <name>[2Fe-2S] cluster</name>
        <dbReference type="ChEBI" id="CHEBI:190135"/>
    </ligand>
</feature>
<feature type="binding site" evidence="1">
    <location>
        <position position="96"/>
    </location>
    <ligand>
        <name>[2Fe-2S] cluster</name>
        <dbReference type="ChEBI" id="CHEBI:190135"/>
    </ligand>
</feature>
<feature type="binding site" evidence="1">
    <location>
        <position position="102"/>
    </location>
    <ligand>
        <name>[2Fe-2S] cluster</name>
        <dbReference type="ChEBI" id="CHEBI:190135"/>
    </ligand>
</feature>
<dbReference type="EMBL" id="FM200053">
    <property type="protein sequence ID" value="CAR62170.1"/>
    <property type="molecule type" value="Genomic_DNA"/>
</dbReference>
<dbReference type="RefSeq" id="WP_001177632.1">
    <property type="nucleotide sequence ID" value="NC_011147.1"/>
</dbReference>
<dbReference type="SMR" id="B5BKI6"/>
<dbReference type="KEGG" id="sek:SSPA3883"/>
<dbReference type="HOGENOM" id="CLU_107144_2_1_6"/>
<dbReference type="Proteomes" id="UP000001869">
    <property type="component" value="Chromosome"/>
</dbReference>
<dbReference type="GO" id="GO:0005829">
    <property type="term" value="C:cytosol"/>
    <property type="evidence" value="ECO:0007669"/>
    <property type="project" value="TreeGrafter"/>
</dbReference>
<dbReference type="GO" id="GO:0051537">
    <property type="term" value="F:2 iron, 2 sulfur cluster binding"/>
    <property type="evidence" value="ECO:0007669"/>
    <property type="project" value="UniProtKB-KW"/>
</dbReference>
<dbReference type="GO" id="GO:0003700">
    <property type="term" value="F:DNA-binding transcription factor activity"/>
    <property type="evidence" value="ECO:0007669"/>
    <property type="project" value="UniProtKB-UniRule"/>
</dbReference>
<dbReference type="GO" id="GO:0003690">
    <property type="term" value="F:double-stranded DNA binding"/>
    <property type="evidence" value="ECO:0007669"/>
    <property type="project" value="UniProtKB-UniRule"/>
</dbReference>
<dbReference type="GO" id="GO:0005506">
    <property type="term" value="F:iron ion binding"/>
    <property type="evidence" value="ECO:0007669"/>
    <property type="project" value="UniProtKB-UniRule"/>
</dbReference>
<dbReference type="GO" id="GO:0045892">
    <property type="term" value="P:negative regulation of DNA-templated transcription"/>
    <property type="evidence" value="ECO:0007669"/>
    <property type="project" value="InterPro"/>
</dbReference>
<dbReference type="FunFam" id="1.10.10.10:FF:000105">
    <property type="entry name" value="HTH-type transcriptional repressor NsrR"/>
    <property type="match status" value="1"/>
</dbReference>
<dbReference type="Gene3D" id="1.10.10.10">
    <property type="entry name" value="Winged helix-like DNA-binding domain superfamily/Winged helix DNA-binding domain"/>
    <property type="match status" value="1"/>
</dbReference>
<dbReference type="HAMAP" id="MF_01177">
    <property type="entry name" value="HTH_type_NsrR"/>
    <property type="match status" value="1"/>
</dbReference>
<dbReference type="InterPro" id="IPR000944">
    <property type="entry name" value="Tscrpt_reg_Rrf2"/>
</dbReference>
<dbReference type="InterPro" id="IPR023761">
    <property type="entry name" value="Tscrpt_rep_HTH_NsrR"/>
</dbReference>
<dbReference type="InterPro" id="IPR036388">
    <property type="entry name" value="WH-like_DNA-bd_sf"/>
</dbReference>
<dbReference type="InterPro" id="IPR036390">
    <property type="entry name" value="WH_DNA-bd_sf"/>
</dbReference>
<dbReference type="NCBIfam" id="NF008240">
    <property type="entry name" value="PRK11014.1"/>
    <property type="match status" value="1"/>
</dbReference>
<dbReference type="NCBIfam" id="TIGR00738">
    <property type="entry name" value="rrf2_super"/>
    <property type="match status" value="1"/>
</dbReference>
<dbReference type="PANTHER" id="PTHR33221:SF4">
    <property type="entry name" value="HTH-TYPE TRANSCRIPTIONAL REPRESSOR NSRR"/>
    <property type="match status" value="1"/>
</dbReference>
<dbReference type="PANTHER" id="PTHR33221">
    <property type="entry name" value="WINGED HELIX-TURN-HELIX TRANSCRIPTIONAL REGULATOR, RRF2 FAMILY"/>
    <property type="match status" value="1"/>
</dbReference>
<dbReference type="Pfam" id="PF02082">
    <property type="entry name" value="Rrf2"/>
    <property type="match status" value="1"/>
</dbReference>
<dbReference type="SUPFAM" id="SSF46785">
    <property type="entry name" value="Winged helix' DNA-binding domain"/>
    <property type="match status" value="1"/>
</dbReference>
<dbReference type="PROSITE" id="PS51197">
    <property type="entry name" value="HTH_RRF2_2"/>
    <property type="match status" value="1"/>
</dbReference>
<organism>
    <name type="scientific">Salmonella paratyphi A (strain AKU_12601)</name>
    <dbReference type="NCBI Taxonomy" id="554290"/>
    <lineage>
        <taxon>Bacteria</taxon>
        <taxon>Pseudomonadati</taxon>
        <taxon>Pseudomonadota</taxon>
        <taxon>Gammaproteobacteria</taxon>
        <taxon>Enterobacterales</taxon>
        <taxon>Enterobacteriaceae</taxon>
        <taxon>Salmonella</taxon>
    </lineage>
</organism>
<accession>B5BKI6</accession>
<evidence type="ECO:0000255" key="1">
    <source>
        <dbReference type="HAMAP-Rule" id="MF_01177"/>
    </source>
</evidence>
<proteinExistence type="inferred from homology"/>
<gene>
    <name evidence="1" type="primary">nsrR</name>
    <name type="ordered locus">SSPA3883</name>
</gene>
<comment type="function">
    <text evidence="1">Nitric oxide-sensitive repressor of genes involved in protecting the cell against nitrosative stress. May require iron for activity.</text>
</comment>
<comment type="cofactor">
    <cofactor evidence="1">
        <name>[2Fe-2S] cluster</name>
        <dbReference type="ChEBI" id="CHEBI:190135"/>
    </cofactor>
    <text evidence="1">Binds 1 [2Fe-2S] cluster per subunit.</text>
</comment>
<name>NSRR_SALPK</name>